<reference key="1">
    <citation type="journal article" date="2008" name="PLoS Genet.">
        <title>Complete genome sequence of the N2-fixing broad host range endophyte Klebsiella pneumoniae 342 and virulence predictions verified in mice.</title>
        <authorList>
            <person name="Fouts D.E."/>
            <person name="Tyler H.L."/>
            <person name="DeBoy R.T."/>
            <person name="Daugherty S."/>
            <person name="Ren Q."/>
            <person name="Badger J.H."/>
            <person name="Durkin A.S."/>
            <person name="Huot H."/>
            <person name="Shrivastava S."/>
            <person name="Kothari S."/>
            <person name="Dodson R.J."/>
            <person name="Mohamoud Y."/>
            <person name="Khouri H."/>
            <person name="Roesch L.F.W."/>
            <person name="Krogfelt K.A."/>
            <person name="Struve C."/>
            <person name="Triplett E.W."/>
            <person name="Methe B.A."/>
        </authorList>
    </citation>
    <scope>NUCLEOTIDE SEQUENCE [LARGE SCALE GENOMIC DNA]</scope>
    <source>
        <strain>342</strain>
    </source>
</reference>
<gene>
    <name evidence="1" type="primary">nudL</name>
    <name type="ordered locus">KPK_1964</name>
</gene>
<evidence type="ECO:0000255" key="1">
    <source>
        <dbReference type="HAMAP-Rule" id="MF_01592"/>
    </source>
</evidence>
<sequence>MADHALNLDDFLSRFQLLRPQPSRHALNQRQAAVLVPIVRRPQPGLLLTQRSPLLRKHAGQVAFPGGAVDNTDATLIAAALREAQEEVAIPPEAVEVIGVLPPVDSVTGFQVTPVVGIIPPNLHYHASQDEVSAVFEMPLAEALRLGRYHPLDIHRRGNDHRVWLSWYQHYFVWGMTAGIIRELALQIGARP</sequence>
<organism>
    <name type="scientific">Klebsiella pneumoniae (strain 342)</name>
    <dbReference type="NCBI Taxonomy" id="507522"/>
    <lineage>
        <taxon>Bacteria</taxon>
        <taxon>Pseudomonadati</taxon>
        <taxon>Pseudomonadota</taxon>
        <taxon>Gammaproteobacteria</taxon>
        <taxon>Enterobacterales</taxon>
        <taxon>Enterobacteriaceae</taxon>
        <taxon>Klebsiella/Raoultella group</taxon>
        <taxon>Klebsiella</taxon>
        <taxon>Klebsiella pneumoniae complex</taxon>
    </lineage>
</organism>
<protein>
    <recommendedName>
        <fullName evidence="1">Uncharacterized Nudix hydrolase NudL</fullName>
        <ecNumber evidence="1">3.6.1.-</ecNumber>
    </recommendedName>
</protein>
<accession>B5XQ60</accession>
<proteinExistence type="inferred from homology"/>
<comment type="function">
    <text evidence="1">Probably mediates the hydrolysis of some nucleoside diphosphate derivatives.</text>
</comment>
<comment type="cofactor">
    <cofactor evidence="1">
        <name>Mn(2+)</name>
        <dbReference type="ChEBI" id="CHEBI:29035"/>
    </cofactor>
    <cofactor evidence="1">
        <name>Mg(2+)</name>
        <dbReference type="ChEBI" id="CHEBI:18420"/>
    </cofactor>
</comment>
<comment type="similarity">
    <text evidence="1">Belongs to the Nudix hydrolase family. PCD1 subfamily.</text>
</comment>
<feature type="chain" id="PRO_0000381772" description="Uncharacterized Nudix hydrolase NudL">
    <location>
        <begin position="1"/>
        <end position="192"/>
    </location>
</feature>
<feature type="domain" description="Nudix hydrolase" evidence="1">
    <location>
        <begin position="29"/>
        <end position="160"/>
    </location>
</feature>
<feature type="short sequence motif" description="Nudix box">
    <location>
        <begin position="67"/>
        <end position="89"/>
    </location>
</feature>
<feature type="binding site" evidence="1">
    <location>
        <position position="83"/>
    </location>
    <ligand>
        <name>Mg(2+)</name>
        <dbReference type="ChEBI" id="CHEBI:18420"/>
    </ligand>
</feature>
<feature type="binding site" evidence="1">
    <location>
        <position position="87"/>
    </location>
    <ligand>
        <name>Mg(2+)</name>
        <dbReference type="ChEBI" id="CHEBI:18420"/>
    </ligand>
</feature>
<name>NUDL_KLEP3</name>
<keyword id="KW-0378">Hydrolase</keyword>
<keyword id="KW-0460">Magnesium</keyword>
<keyword id="KW-0464">Manganese</keyword>
<keyword id="KW-0479">Metal-binding</keyword>
<dbReference type="EC" id="3.6.1.-" evidence="1"/>
<dbReference type="EMBL" id="CP000964">
    <property type="protein sequence ID" value="ACI11916.1"/>
    <property type="molecule type" value="Genomic_DNA"/>
</dbReference>
<dbReference type="SMR" id="B5XQ60"/>
<dbReference type="KEGG" id="kpe:KPK_1964"/>
<dbReference type="HOGENOM" id="CLU_040940_5_2_6"/>
<dbReference type="Proteomes" id="UP000001734">
    <property type="component" value="Chromosome"/>
</dbReference>
<dbReference type="GO" id="GO:0010945">
    <property type="term" value="F:coenzyme A diphosphatase activity"/>
    <property type="evidence" value="ECO:0007669"/>
    <property type="project" value="InterPro"/>
</dbReference>
<dbReference type="GO" id="GO:0000287">
    <property type="term" value="F:magnesium ion binding"/>
    <property type="evidence" value="ECO:0007669"/>
    <property type="project" value="UniProtKB-UniRule"/>
</dbReference>
<dbReference type="GO" id="GO:0030145">
    <property type="term" value="F:manganese ion binding"/>
    <property type="evidence" value="ECO:0007669"/>
    <property type="project" value="UniProtKB-UniRule"/>
</dbReference>
<dbReference type="GO" id="GO:0009132">
    <property type="term" value="P:nucleoside diphosphate metabolic process"/>
    <property type="evidence" value="ECO:0007669"/>
    <property type="project" value="InterPro"/>
</dbReference>
<dbReference type="CDD" id="cd03426">
    <property type="entry name" value="NUDIX_CoAse_Nudt7"/>
    <property type="match status" value="1"/>
</dbReference>
<dbReference type="Gene3D" id="3.90.79.10">
    <property type="entry name" value="Nucleoside Triphosphate Pyrophosphohydrolase"/>
    <property type="match status" value="1"/>
</dbReference>
<dbReference type="HAMAP" id="MF_01592">
    <property type="entry name" value="Nudix_NudL"/>
    <property type="match status" value="1"/>
</dbReference>
<dbReference type="InterPro" id="IPR045121">
    <property type="entry name" value="CoAse"/>
</dbReference>
<dbReference type="InterPro" id="IPR015797">
    <property type="entry name" value="NUDIX_hydrolase-like_dom_sf"/>
</dbReference>
<dbReference type="InterPro" id="IPR000086">
    <property type="entry name" value="NUDIX_hydrolase_dom"/>
</dbReference>
<dbReference type="InterPro" id="IPR000059">
    <property type="entry name" value="NUDIX_hydrolase_NudL_CS"/>
</dbReference>
<dbReference type="InterPro" id="IPR023735">
    <property type="entry name" value="Nudix_NudL"/>
</dbReference>
<dbReference type="NCBIfam" id="NF007980">
    <property type="entry name" value="PRK10707.1"/>
    <property type="match status" value="1"/>
</dbReference>
<dbReference type="PANTHER" id="PTHR12992:SF11">
    <property type="entry name" value="MITOCHONDRIAL COENZYME A DIPHOSPHATASE NUDT8"/>
    <property type="match status" value="1"/>
</dbReference>
<dbReference type="PANTHER" id="PTHR12992">
    <property type="entry name" value="NUDIX HYDROLASE"/>
    <property type="match status" value="1"/>
</dbReference>
<dbReference type="Pfam" id="PF00293">
    <property type="entry name" value="NUDIX"/>
    <property type="match status" value="1"/>
</dbReference>
<dbReference type="SUPFAM" id="SSF55811">
    <property type="entry name" value="Nudix"/>
    <property type="match status" value="1"/>
</dbReference>
<dbReference type="PROSITE" id="PS51462">
    <property type="entry name" value="NUDIX"/>
    <property type="match status" value="1"/>
</dbReference>
<dbReference type="PROSITE" id="PS01293">
    <property type="entry name" value="NUDIX_COA"/>
    <property type="match status" value="1"/>
</dbReference>